<sequence length="1574" mass="171126">MAERGLEPSPAAVAALPPEVRAQLAELELELSEGDITQKGYEKKRSKLLSPYSPQTQETDSIGQKERNQTPAPTAAQTSAPSKYHRSRSGGARDERYRSDIHTEAVQAALAKHKEQKMALPMPTKRRSTFVQSPADACTPPDTSSASEDEGSLRRQAALSAALQQSLQNAESWINRSIQGSSTSSSASSTLSHGEVKGTSGSLADVFANTRIENVSAPPDVTATTSSSSSSLRPANIDLPPSGIVKGMHKGSNRSSLMDTADGVPVNSRVSTKIQQLLNTLKRPKRPPLKEFFVDDSEEIVEGIPQPDPNQPKPEGRQMTPVKGEPLGVICNWPPALESALQRWGSTQAKCPCLTGLDVTGKPVYTLTYGKLWSRSLKLAYTLLNKLGTKNEPVLKPGDRVALVYPNNDPVMFMVAFYGCLLAEVIPVPIEVPLTRKDAGGQQIGFLLGSCGIALALTSEICLKGLPKTQNGEIVQFKGWPRLKWVVTDSKYLSKPPKDWQPHISPAGTEPAYIEYKTSKEGSVMGVTVSRLAMLSQCQALSQACNYSEGETVVNVLDFKKDAGLWHGMFANVMNKMHTISVPYSVMKTCPLSWVQRVHAHKAKVALVKCRDLHWAMMAHRDQRDVSLSSLRMLIVTDGANPWSVSSCDAFLSLFQSHGLKPEAICPCATSAEAMTVAIRRPGVPGAPLPGRAILSMNGLSYGVIRVNTEDKNSALTVQDVGHVMPGGMMCIVKPDGLPQLCRTDEIGEICVSSRTGGMMYFGLAGVTKNTFEVIPVTSSGSPVGDVPFIRSGLLGFVGPGSLVFVVGKMDGLLMVSGRRHNADDIVATGLAVESIKTVYRGRIAVFSVSVFYDERIVVVAEQRPDASEEDSFQWMSRVLQAIDSIHQVGVYCLALVPANTLPKTPLGGIHISQTKQLFLEGSLHPCNILMCPHTCVTNLPKPRQKQPGVGPASVMVGNLVAGKRIAQAAGRDLGQIEENDLVRKHQFLAEILQWRAQATPDHVLFMLLNAKGTTVCTASCLQLHKRAERIASVLGDKGHLNAGDNVVLLYPPGIELIAAFYGCLYAGCIPVTVRPPHAQNLTATLPTVRMVVDVSKAACVLTTQTLMRLLKSREAAAAVDVKTWPAIIDTDDLPRKRLPQLYKPPTPEMLAYLDFSVSTTGMLTGVKMSHSAVNALCRAIKLQCELYSSRQIAICLDPYCGLGFALWCLCSVYSGHQSVLIPPMELENNLFLWLATVNQYKIRDTFCSYSVMELCTKGLGNQVEVLKTRGINLSCIRTCVVVAEERPRVSLQQSFSKLFKDIGLSPRAVSTTFGSRVNVAICLQGTSGPDPTTVYVDLKSLRHDRVRLVERGAPQSLLLSESGKILPGVKVVIVNPETKGPVGDSHLGEIWVNSPHTASGYYTIYDSETLQADHFNTRLSFGDAAQTLWARTGYLGFVRRTELTAATGERHDALYVVGALDETLELRGLRYHPIDIETSVSRVHRSIAECAVFTWTNLLVVVVELCGSEQEALDLVPLVTNVVLEEHYLIVGVVVVVDPGVVPINSRGEKQRMHLRDSFLADQLDPIYVAYNM</sequence>
<protein>
    <recommendedName>
        <fullName>Disco-interacting protein 2 homolog B</fullName>
        <shortName>DIP2 homolog B</shortName>
    </recommendedName>
</protein>
<accession>Q3UH60</accession>
<accession>Q8C1W5</accession>
<accession>Q8CDG9</accession>
<accession>Q8CHA2</accession>
<feature type="chain" id="PRO_0000318737" description="Disco-interacting protein 2 homolog B">
    <location>
        <begin position="1"/>
        <end position="1574"/>
    </location>
</feature>
<feature type="domain" description="DMAP1-binding" evidence="2">
    <location>
        <begin position="12"/>
        <end position="130"/>
    </location>
</feature>
<feature type="region of interest" description="Disordered" evidence="3">
    <location>
        <begin position="31"/>
        <end position="166"/>
    </location>
</feature>
<feature type="region of interest" description="Disordered" evidence="3">
    <location>
        <begin position="178"/>
        <end position="200"/>
    </location>
</feature>
<feature type="region of interest" description="Disordered" evidence="3">
    <location>
        <begin position="217"/>
        <end position="244"/>
    </location>
</feature>
<feature type="compositionally biased region" description="Polar residues" evidence="3">
    <location>
        <begin position="52"/>
        <end position="62"/>
    </location>
</feature>
<feature type="compositionally biased region" description="Low complexity" evidence="3">
    <location>
        <begin position="69"/>
        <end position="82"/>
    </location>
</feature>
<feature type="compositionally biased region" description="Basic and acidic residues" evidence="3">
    <location>
        <begin position="91"/>
        <end position="103"/>
    </location>
</feature>
<feature type="compositionally biased region" description="Low complexity" evidence="3">
    <location>
        <begin position="154"/>
        <end position="166"/>
    </location>
</feature>
<feature type="compositionally biased region" description="Low complexity" evidence="3">
    <location>
        <begin position="181"/>
        <end position="192"/>
    </location>
</feature>
<feature type="modified residue" description="Phosphoserine" evidence="1">
    <location>
        <position position="9"/>
    </location>
</feature>
<feature type="modified residue" description="Phosphoserine" evidence="1">
    <location>
        <position position="50"/>
    </location>
</feature>
<feature type="modified residue" description="Phosphoserine" evidence="1">
    <location>
        <position position="53"/>
    </location>
</feature>
<feature type="modified residue" description="Phosphothreonine" evidence="1">
    <location>
        <position position="70"/>
    </location>
</feature>
<feature type="modified residue" description="Phosphoserine" evidence="7">
    <location>
        <position position="99"/>
    </location>
</feature>
<feature type="modified residue" description="Phosphothreonine" evidence="1">
    <location>
        <position position="139"/>
    </location>
</feature>
<feature type="modified residue" description="Phosphoserine" evidence="1">
    <location>
        <position position="145"/>
    </location>
</feature>
<feature type="modified residue" description="Phosphoserine" evidence="1">
    <location>
        <position position="147"/>
    </location>
</feature>
<feature type="modified residue" description="Phosphoserine" evidence="7">
    <location>
        <position position="152"/>
    </location>
</feature>
<feature type="modified residue" description="Phosphoserine" evidence="1">
    <location>
        <position position="177"/>
    </location>
</feature>
<feature type="modified residue" description="Phosphoserine" evidence="1">
    <location>
        <position position="192"/>
    </location>
</feature>
<feature type="modified residue" description="Phosphoserine" evidence="7">
    <location>
        <position position="202"/>
    </location>
</feature>
<feature type="modified residue" description="Phosphoserine" evidence="1">
    <location>
        <position position="256"/>
    </location>
</feature>
<feature type="splice variant" id="VSP_031278" description="In isoform 2." evidence="5">
    <location>
        <begin position="1"/>
        <end position="233"/>
    </location>
</feature>
<feature type="splice variant" id="VSP_031279" description="In isoform 2." evidence="5">
    <original>PANIDLPPSGIVKGMHKGSNRSSLMDTADG</original>
    <variation>MVGFHRRCCELTVEKRSSTREEGAWVAFPC</variation>
    <location>
        <begin position="234"/>
        <end position="263"/>
    </location>
</feature>
<feature type="sequence conflict" description="In Ref. 1; BAC26764." evidence="6" ref="1">
    <original>GI</original>
    <variation>V</variation>
    <location>
        <begin position="303"/>
        <end position="304"/>
    </location>
</feature>
<name>DIP2B_MOUSE</name>
<dbReference type="EMBL" id="AK030064">
    <property type="protein sequence ID" value="BAC26764.1"/>
    <property type="molecule type" value="mRNA"/>
</dbReference>
<dbReference type="EMBL" id="AK090139">
    <property type="protein sequence ID" value="BAC41112.1"/>
    <property type="status" value="ALT_INIT"/>
    <property type="molecule type" value="mRNA"/>
</dbReference>
<dbReference type="EMBL" id="AK147562">
    <property type="protein sequence ID" value="BAE27997.1"/>
    <property type="molecule type" value="mRNA"/>
</dbReference>
<dbReference type="EMBL" id="AB093297">
    <property type="protein sequence ID" value="BAC41479.1"/>
    <property type="molecule type" value="mRNA"/>
</dbReference>
<dbReference type="CCDS" id="CCDS49731.1">
    <molecule id="Q3UH60-1"/>
</dbReference>
<dbReference type="RefSeq" id="NP_001152833.1">
    <molecule id="Q3UH60-1"/>
    <property type="nucleotide sequence ID" value="NM_001159361.3"/>
</dbReference>
<dbReference type="SMR" id="Q3UH60"/>
<dbReference type="BioGRID" id="232113">
    <property type="interactions" value="15"/>
</dbReference>
<dbReference type="FunCoup" id="Q3UH60">
    <property type="interactions" value="3059"/>
</dbReference>
<dbReference type="IntAct" id="Q3UH60">
    <property type="interactions" value="4"/>
</dbReference>
<dbReference type="MINT" id="Q3UH60"/>
<dbReference type="STRING" id="10090.ENSMUSP00000097777"/>
<dbReference type="GlyGen" id="Q3UH60">
    <property type="glycosylation" value="3 sites, 2 N-linked glycans (2 sites)"/>
</dbReference>
<dbReference type="iPTMnet" id="Q3UH60"/>
<dbReference type="PhosphoSitePlus" id="Q3UH60"/>
<dbReference type="SwissPalm" id="Q3UH60"/>
<dbReference type="jPOST" id="Q3UH60"/>
<dbReference type="PaxDb" id="10090-ENSMUSP00000097777"/>
<dbReference type="PeptideAtlas" id="Q3UH60"/>
<dbReference type="ProteomicsDB" id="279415">
    <molecule id="Q3UH60-1"/>
</dbReference>
<dbReference type="ProteomicsDB" id="279416">
    <molecule id="Q3UH60-2"/>
</dbReference>
<dbReference type="Pumba" id="Q3UH60"/>
<dbReference type="Antibodypedia" id="55127">
    <property type="antibodies" value="34 antibodies from 14 providers"/>
</dbReference>
<dbReference type="DNASU" id="239667"/>
<dbReference type="Ensembl" id="ENSMUST00000100203.10">
    <molecule id="Q3UH60-1"/>
    <property type="protein sequence ID" value="ENSMUSP00000097777.4"/>
    <property type="gene ID" value="ENSMUSG00000023026.17"/>
</dbReference>
<dbReference type="GeneID" id="239667"/>
<dbReference type="KEGG" id="mmu:239667"/>
<dbReference type="UCSC" id="uc007xqq.2">
    <molecule id="Q3UH60-1"/>
    <property type="organism name" value="mouse"/>
</dbReference>
<dbReference type="AGR" id="MGI:2145977"/>
<dbReference type="CTD" id="57609"/>
<dbReference type="MGI" id="MGI:2145977">
    <property type="gene designation" value="Dip2b"/>
</dbReference>
<dbReference type="VEuPathDB" id="HostDB:ENSMUSG00000023026"/>
<dbReference type="eggNOG" id="KOG3628">
    <property type="taxonomic scope" value="Eukaryota"/>
</dbReference>
<dbReference type="GeneTree" id="ENSGT00950000182997"/>
<dbReference type="InParanoid" id="Q3UH60"/>
<dbReference type="OMA" id="FYACLYI"/>
<dbReference type="OrthoDB" id="69964at2759"/>
<dbReference type="PhylomeDB" id="Q3UH60"/>
<dbReference type="TreeFam" id="TF312871"/>
<dbReference type="BioGRID-ORCS" id="239667">
    <property type="hits" value="1 hit in 60 CRISPR screens"/>
</dbReference>
<dbReference type="CD-CODE" id="CE726F99">
    <property type="entry name" value="Postsynaptic density"/>
</dbReference>
<dbReference type="ChiTaRS" id="Dip2b">
    <property type="organism name" value="mouse"/>
</dbReference>
<dbReference type="PRO" id="PR:Q3UH60"/>
<dbReference type="Proteomes" id="UP000000589">
    <property type="component" value="Chromosome 15"/>
</dbReference>
<dbReference type="RNAct" id="Q3UH60">
    <property type="molecule type" value="protein"/>
</dbReference>
<dbReference type="Bgee" id="ENSMUSG00000023026">
    <property type="expression patterns" value="Expressed in floor plate of midbrain and 260 other cell types or tissues"/>
</dbReference>
<dbReference type="ExpressionAtlas" id="Q3UH60">
    <property type="expression patterns" value="baseline and differential"/>
</dbReference>
<dbReference type="GO" id="GO:0030424">
    <property type="term" value="C:axon"/>
    <property type="evidence" value="ECO:0000314"/>
    <property type="project" value="UniProtKB"/>
</dbReference>
<dbReference type="GO" id="GO:0005737">
    <property type="term" value="C:cytoplasm"/>
    <property type="evidence" value="ECO:0007669"/>
    <property type="project" value="Ensembl"/>
</dbReference>
<dbReference type="GO" id="GO:0030425">
    <property type="term" value="C:dendrite"/>
    <property type="evidence" value="ECO:0000314"/>
    <property type="project" value="UniProtKB"/>
</dbReference>
<dbReference type="GO" id="GO:0005634">
    <property type="term" value="C:nucleus"/>
    <property type="evidence" value="ECO:0007669"/>
    <property type="project" value="Ensembl"/>
</dbReference>
<dbReference type="GO" id="GO:0043204">
    <property type="term" value="C:perikaryon"/>
    <property type="evidence" value="ECO:0000314"/>
    <property type="project" value="UniProtKB"/>
</dbReference>
<dbReference type="GO" id="GO:0043014">
    <property type="term" value="F:alpha-tubulin binding"/>
    <property type="evidence" value="ECO:0000314"/>
    <property type="project" value="UniProtKB"/>
</dbReference>
<dbReference type="GO" id="GO:0030517">
    <property type="term" value="P:negative regulation of axon extension"/>
    <property type="evidence" value="ECO:0000315"/>
    <property type="project" value="UniProtKB"/>
</dbReference>
<dbReference type="GO" id="GO:0007399">
    <property type="term" value="P:nervous system development"/>
    <property type="evidence" value="ECO:0007669"/>
    <property type="project" value="UniProtKB-KW"/>
</dbReference>
<dbReference type="GO" id="GO:2000758">
    <property type="term" value="P:positive regulation of peptidyl-lysine acetylation"/>
    <property type="evidence" value="ECO:0000315"/>
    <property type="project" value="UniProtKB"/>
</dbReference>
<dbReference type="CDD" id="cd05905">
    <property type="entry name" value="Dip2"/>
    <property type="match status" value="2"/>
</dbReference>
<dbReference type="FunFam" id="3.30.300.30:FF:000003">
    <property type="entry name" value="DIP2 disco-interacting protein 2 homolog A"/>
    <property type="match status" value="1"/>
</dbReference>
<dbReference type="FunFam" id="3.30.300.30:FF:000001">
    <property type="entry name" value="DIP2 disco-interacting protein 2 homolog C"/>
    <property type="match status" value="1"/>
</dbReference>
<dbReference type="FunFam" id="3.40.50.12780:FF:000004">
    <property type="entry name" value="Disco interacting protein 2 homolog A"/>
    <property type="match status" value="1"/>
</dbReference>
<dbReference type="FunFam" id="3.40.50.12780:FF:000002">
    <property type="entry name" value="Disco interacting protein 2 homolog B"/>
    <property type="match status" value="1"/>
</dbReference>
<dbReference type="Gene3D" id="3.30.300.30">
    <property type="match status" value="2"/>
</dbReference>
<dbReference type="Gene3D" id="3.40.50.12780">
    <property type="entry name" value="N-terminal domain of ligase-like"/>
    <property type="match status" value="2"/>
</dbReference>
<dbReference type="InterPro" id="IPR025110">
    <property type="entry name" value="AMP-bd_C"/>
</dbReference>
<dbReference type="InterPro" id="IPR045851">
    <property type="entry name" value="AMP-bd_C_sf"/>
</dbReference>
<dbReference type="InterPro" id="IPR000873">
    <property type="entry name" value="AMP-dep_synth/lig_dom"/>
</dbReference>
<dbReference type="InterPro" id="IPR042099">
    <property type="entry name" value="ANL_N_sf"/>
</dbReference>
<dbReference type="InterPro" id="IPR037337">
    <property type="entry name" value="Dip2-like_dom"/>
</dbReference>
<dbReference type="InterPro" id="IPR010506">
    <property type="entry name" value="DMAP1-bd"/>
</dbReference>
<dbReference type="PANTHER" id="PTHR22754">
    <property type="entry name" value="DISCO-INTERACTING PROTEIN 2 DIP2 -RELATED"/>
    <property type="match status" value="1"/>
</dbReference>
<dbReference type="PANTHER" id="PTHR22754:SF38">
    <property type="entry name" value="DISCO-INTERACTING PROTEIN 2 HOMOLOG B"/>
    <property type="match status" value="1"/>
</dbReference>
<dbReference type="Pfam" id="PF00501">
    <property type="entry name" value="AMP-binding"/>
    <property type="match status" value="2"/>
</dbReference>
<dbReference type="Pfam" id="PF23024">
    <property type="entry name" value="AMP-dom_DIP2-like"/>
    <property type="match status" value="1"/>
</dbReference>
<dbReference type="Pfam" id="PF06464">
    <property type="entry name" value="DMAP_binding"/>
    <property type="match status" value="1"/>
</dbReference>
<dbReference type="SMART" id="SM01137">
    <property type="entry name" value="DMAP_binding"/>
    <property type="match status" value="1"/>
</dbReference>
<dbReference type="SUPFAM" id="SSF56801">
    <property type="entry name" value="Acetyl-CoA synthetase-like"/>
    <property type="match status" value="2"/>
</dbReference>
<dbReference type="PROSITE" id="PS51912">
    <property type="entry name" value="DMAP1_BIND"/>
    <property type="match status" value="1"/>
</dbReference>
<evidence type="ECO:0000250" key="1">
    <source>
        <dbReference type="UniProtKB" id="Q9P265"/>
    </source>
</evidence>
<evidence type="ECO:0000255" key="2">
    <source>
        <dbReference type="PROSITE-ProRule" id="PRU01260"/>
    </source>
</evidence>
<evidence type="ECO:0000256" key="3">
    <source>
        <dbReference type="SAM" id="MobiDB-lite"/>
    </source>
</evidence>
<evidence type="ECO:0000269" key="4">
    <source>
    </source>
</evidence>
<evidence type="ECO:0000303" key="5">
    <source>
    </source>
</evidence>
<evidence type="ECO:0000305" key="6"/>
<evidence type="ECO:0007744" key="7">
    <source>
    </source>
</evidence>
<keyword id="KW-0025">Alternative splicing</keyword>
<keyword id="KW-0966">Cell projection</keyword>
<keyword id="KW-0524">Neurogenesis</keyword>
<keyword id="KW-0597">Phosphoprotein</keyword>
<keyword id="KW-1185">Reference proteome</keyword>
<comment type="function">
    <text evidence="4">Negatively regulates axonal outgrowth and is essential for normal synaptic transmission (PubMed:32153366). Not required for regulation of axon polarity (PubMed:32153366). Promotes acetylation of alpha-tubulin (PubMed:32153366).</text>
</comment>
<comment type="subunit">
    <text evidence="4">Interacts with alpha-tubulin.</text>
</comment>
<comment type="subcellular location">
    <subcellularLocation>
        <location evidence="4">Cell projection</location>
        <location evidence="4">Dendrite</location>
    </subcellularLocation>
    <subcellularLocation>
        <location evidence="4">Cell projection</location>
        <location evidence="4">Axon</location>
    </subcellularLocation>
    <subcellularLocation>
        <location evidence="4">Perikaryon</location>
    </subcellularLocation>
</comment>
<comment type="alternative products">
    <event type="alternative splicing"/>
    <isoform>
        <id>Q3UH60-1</id>
        <name>1</name>
        <sequence type="displayed"/>
    </isoform>
    <isoform>
        <id>Q3UH60-2</id>
        <name>2</name>
        <sequence type="described" ref="VSP_031278 VSP_031279"/>
    </isoform>
</comment>
<comment type="tissue specificity">
    <text evidence="4">Highly expressed in brain and spinal cord (at protein level) (PubMed:32153366). In brain, expression is detected in the main olfactory bulb, cortex, lateral ventricle, cornu ammonis 1, cornu ammonis 3, dentate gyrus, striatum, cerebellar cortex and medial habenula (PubMed:32153366). Expressed primarily in neurons including excitatory pyramidal neurons and inhibitory interneurons (PubMed:32153366).</text>
</comment>
<comment type="developmental stage">
    <text evidence="4">In the embryo, expression initiates at 15.5 dpc in both the neocortex and hippocampus.</text>
</comment>
<comment type="disruption phenotype">
    <text evidence="4">Excessive axonal outgrowth and branching with decreased dendritic outgrowth (PubMed:32153366). Reduced acetylation of alpha-tubulin (PubMed:32153366).</text>
</comment>
<comment type="similarity">
    <text evidence="6">Belongs to the DIP2 family.</text>
</comment>
<comment type="sequence caution" evidence="6">
    <conflict type="erroneous initiation">
        <sequence resource="EMBL-CDS" id="BAC41112"/>
    </conflict>
</comment>
<proteinExistence type="evidence at protein level"/>
<reference key="1">
    <citation type="journal article" date="2005" name="Science">
        <title>The transcriptional landscape of the mammalian genome.</title>
        <authorList>
            <person name="Carninci P."/>
            <person name="Kasukawa T."/>
            <person name="Katayama S."/>
            <person name="Gough J."/>
            <person name="Frith M.C."/>
            <person name="Maeda N."/>
            <person name="Oyama R."/>
            <person name="Ravasi T."/>
            <person name="Lenhard B."/>
            <person name="Wells C."/>
            <person name="Kodzius R."/>
            <person name="Shimokawa K."/>
            <person name="Bajic V.B."/>
            <person name="Brenner S.E."/>
            <person name="Batalov S."/>
            <person name="Forrest A.R."/>
            <person name="Zavolan M."/>
            <person name="Davis M.J."/>
            <person name="Wilming L.G."/>
            <person name="Aidinis V."/>
            <person name="Allen J.E."/>
            <person name="Ambesi-Impiombato A."/>
            <person name="Apweiler R."/>
            <person name="Aturaliya R.N."/>
            <person name="Bailey T.L."/>
            <person name="Bansal M."/>
            <person name="Baxter L."/>
            <person name="Beisel K.W."/>
            <person name="Bersano T."/>
            <person name="Bono H."/>
            <person name="Chalk A.M."/>
            <person name="Chiu K.P."/>
            <person name="Choudhary V."/>
            <person name="Christoffels A."/>
            <person name="Clutterbuck D.R."/>
            <person name="Crowe M.L."/>
            <person name="Dalla E."/>
            <person name="Dalrymple B.P."/>
            <person name="de Bono B."/>
            <person name="Della Gatta G."/>
            <person name="di Bernardo D."/>
            <person name="Down T."/>
            <person name="Engstrom P."/>
            <person name="Fagiolini M."/>
            <person name="Faulkner G."/>
            <person name="Fletcher C.F."/>
            <person name="Fukushima T."/>
            <person name="Furuno M."/>
            <person name="Futaki S."/>
            <person name="Gariboldi M."/>
            <person name="Georgii-Hemming P."/>
            <person name="Gingeras T.R."/>
            <person name="Gojobori T."/>
            <person name="Green R.E."/>
            <person name="Gustincich S."/>
            <person name="Harbers M."/>
            <person name="Hayashi Y."/>
            <person name="Hensch T.K."/>
            <person name="Hirokawa N."/>
            <person name="Hill D."/>
            <person name="Huminiecki L."/>
            <person name="Iacono M."/>
            <person name="Ikeo K."/>
            <person name="Iwama A."/>
            <person name="Ishikawa T."/>
            <person name="Jakt M."/>
            <person name="Kanapin A."/>
            <person name="Katoh M."/>
            <person name="Kawasawa Y."/>
            <person name="Kelso J."/>
            <person name="Kitamura H."/>
            <person name="Kitano H."/>
            <person name="Kollias G."/>
            <person name="Krishnan S.P."/>
            <person name="Kruger A."/>
            <person name="Kummerfeld S.K."/>
            <person name="Kurochkin I.V."/>
            <person name="Lareau L.F."/>
            <person name="Lazarevic D."/>
            <person name="Lipovich L."/>
            <person name="Liu J."/>
            <person name="Liuni S."/>
            <person name="McWilliam S."/>
            <person name="Madan Babu M."/>
            <person name="Madera M."/>
            <person name="Marchionni L."/>
            <person name="Matsuda H."/>
            <person name="Matsuzawa S."/>
            <person name="Miki H."/>
            <person name="Mignone F."/>
            <person name="Miyake S."/>
            <person name="Morris K."/>
            <person name="Mottagui-Tabar S."/>
            <person name="Mulder N."/>
            <person name="Nakano N."/>
            <person name="Nakauchi H."/>
            <person name="Ng P."/>
            <person name="Nilsson R."/>
            <person name="Nishiguchi S."/>
            <person name="Nishikawa S."/>
            <person name="Nori F."/>
            <person name="Ohara O."/>
            <person name="Okazaki Y."/>
            <person name="Orlando V."/>
            <person name="Pang K.C."/>
            <person name="Pavan W.J."/>
            <person name="Pavesi G."/>
            <person name="Pesole G."/>
            <person name="Petrovsky N."/>
            <person name="Piazza S."/>
            <person name="Reed J."/>
            <person name="Reid J.F."/>
            <person name="Ring B.Z."/>
            <person name="Ringwald M."/>
            <person name="Rost B."/>
            <person name="Ruan Y."/>
            <person name="Salzberg S.L."/>
            <person name="Sandelin A."/>
            <person name="Schneider C."/>
            <person name="Schoenbach C."/>
            <person name="Sekiguchi K."/>
            <person name="Semple C.A."/>
            <person name="Seno S."/>
            <person name="Sessa L."/>
            <person name="Sheng Y."/>
            <person name="Shibata Y."/>
            <person name="Shimada H."/>
            <person name="Shimada K."/>
            <person name="Silva D."/>
            <person name="Sinclair B."/>
            <person name="Sperling S."/>
            <person name="Stupka E."/>
            <person name="Sugiura K."/>
            <person name="Sultana R."/>
            <person name="Takenaka Y."/>
            <person name="Taki K."/>
            <person name="Tammoja K."/>
            <person name="Tan S.L."/>
            <person name="Tang S."/>
            <person name="Taylor M.S."/>
            <person name="Tegner J."/>
            <person name="Teichmann S.A."/>
            <person name="Ueda H.R."/>
            <person name="van Nimwegen E."/>
            <person name="Verardo R."/>
            <person name="Wei C.L."/>
            <person name="Yagi K."/>
            <person name="Yamanishi H."/>
            <person name="Zabarovsky E."/>
            <person name="Zhu S."/>
            <person name="Zimmer A."/>
            <person name="Hide W."/>
            <person name="Bult C."/>
            <person name="Grimmond S.M."/>
            <person name="Teasdale R.D."/>
            <person name="Liu E.T."/>
            <person name="Brusic V."/>
            <person name="Quackenbush J."/>
            <person name="Wahlestedt C."/>
            <person name="Mattick J.S."/>
            <person name="Hume D.A."/>
            <person name="Kai C."/>
            <person name="Sasaki D."/>
            <person name="Tomaru Y."/>
            <person name="Fukuda S."/>
            <person name="Kanamori-Katayama M."/>
            <person name="Suzuki M."/>
            <person name="Aoki J."/>
            <person name="Arakawa T."/>
            <person name="Iida J."/>
            <person name="Imamura K."/>
            <person name="Itoh M."/>
            <person name="Kato T."/>
            <person name="Kawaji H."/>
            <person name="Kawagashira N."/>
            <person name="Kawashima T."/>
            <person name="Kojima M."/>
            <person name="Kondo S."/>
            <person name="Konno H."/>
            <person name="Nakano K."/>
            <person name="Ninomiya N."/>
            <person name="Nishio T."/>
            <person name="Okada M."/>
            <person name="Plessy C."/>
            <person name="Shibata K."/>
            <person name="Shiraki T."/>
            <person name="Suzuki S."/>
            <person name="Tagami M."/>
            <person name="Waki K."/>
            <person name="Watahiki A."/>
            <person name="Okamura-Oho Y."/>
            <person name="Suzuki H."/>
            <person name="Kawai J."/>
            <person name="Hayashizaki Y."/>
        </authorList>
    </citation>
    <scope>NUCLEOTIDE SEQUENCE [LARGE SCALE MRNA] (ISOFORMS 1 AND 2)</scope>
    <source>
        <strain>C57BL/6J</strain>
        <tissue>Brain</tissue>
        <tissue>Testis</tissue>
    </source>
</reference>
<reference key="2">
    <citation type="journal article" date="2002" name="DNA Res.">
        <title>Prediction of the coding sequences of mouse homologues of KIAA gene: I. The complete nucleotide sequences of 100 mouse KIAA-homologous cDNAs identified by screening of terminal sequences of cDNA clones randomly sampled from size-fractionated libraries.</title>
        <authorList>
            <person name="Okazaki N."/>
            <person name="Kikuno R."/>
            <person name="Ohara R."/>
            <person name="Inamoto S."/>
            <person name="Hara Y."/>
            <person name="Nagase T."/>
            <person name="Ohara O."/>
            <person name="Koga H."/>
        </authorList>
    </citation>
    <scope>NUCLEOTIDE SEQUENCE [LARGE SCALE MRNA] OF 614-1574</scope>
    <source>
        <tissue>Brain</tissue>
    </source>
</reference>
<reference key="3">
    <citation type="journal article" date="2007" name="Proc. Natl. Acad. Sci. U.S.A.">
        <title>Large-scale phosphorylation analysis of mouse liver.</title>
        <authorList>
            <person name="Villen J."/>
            <person name="Beausoleil S.A."/>
            <person name="Gerber S.A."/>
            <person name="Gygi S.P."/>
        </authorList>
    </citation>
    <scope>IDENTIFICATION BY MASS SPECTROMETRY [LARGE SCALE ANALYSIS]</scope>
    <source>
        <tissue>Liver</tissue>
    </source>
</reference>
<reference key="4">
    <citation type="journal article" date="2009" name="Immunity">
        <title>The phagosomal proteome in interferon-gamma-activated macrophages.</title>
        <authorList>
            <person name="Trost M."/>
            <person name="English L."/>
            <person name="Lemieux S."/>
            <person name="Courcelles M."/>
            <person name="Desjardins M."/>
            <person name="Thibault P."/>
        </authorList>
    </citation>
    <scope>IDENTIFICATION BY MASS SPECTROMETRY [LARGE SCALE ANALYSIS]</scope>
</reference>
<reference key="5">
    <citation type="journal article" date="2010" name="Cell">
        <title>A tissue-specific atlas of mouse protein phosphorylation and expression.</title>
        <authorList>
            <person name="Huttlin E.L."/>
            <person name="Jedrychowski M.P."/>
            <person name="Elias J.E."/>
            <person name="Goswami T."/>
            <person name="Rad R."/>
            <person name="Beausoleil S.A."/>
            <person name="Villen J."/>
            <person name="Haas W."/>
            <person name="Sowa M.E."/>
            <person name="Gygi S.P."/>
        </authorList>
    </citation>
    <scope>PHOSPHORYLATION [LARGE SCALE ANALYSIS] AT SER-99; SER-152 AND SER-202</scope>
    <scope>IDENTIFICATION BY MASS SPECTROMETRY [LARGE SCALE ANALYSIS]</scope>
    <source>
        <tissue>Brain</tissue>
        <tissue>Brown adipose tissue</tissue>
        <tissue>Heart</tissue>
        <tissue>Kidney</tissue>
        <tissue>Liver</tissue>
        <tissue>Lung</tissue>
        <tissue>Pancreas</tissue>
        <tissue>Spleen</tissue>
        <tissue>Testis</tissue>
    </source>
</reference>
<reference key="6">
    <citation type="journal article" date="2020" name="Front. Cell. Neurosci.">
        <title>DIP2B Interacts With alpha-Tubulin to Regulate Axon Outgrowth.</title>
        <authorList>
            <person name="Xing Z.K."/>
            <person name="Zhang L.Q."/>
            <person name="Zhang Y."/>
            <person name="Sun X."/>
            <person name="Sun X.L."/>
            <person name="Yu H.L."/>
            <person name="Zheng Y.W."/>
            <person name="He Z.X."/>
            <person name="Zhu X.J."/>
        </authorList>
    </citation>
    <scope>FUNCTION</scope>
    <scope>INTERACTION WITH ALPHA-TUBULIN</scope>
    <scope>SUBCELLULAR LOCATION</scope>
    <scope>TISSUE SPECIFICITY</scope>
    <scope>DEVELOPMENTAL STAGE</scope>
    <scope>DISRUPTION PHENOTYPE</scope>
</reference>
<organism>
    <name type="scientific">Mus musculus</name>
    <name type="common">Mouse</name>
    <dbReference type="NCBI Taxonomy" id="10090"/>
    <lineage>
        <taxon>Eukaryota</taxon>
        <taxon>Metazoa</taxon>
        <taxon>Chordata</taxon>
        <taxon>Craniata</taxon>
        <taxon>Vertebrata</taxon>
        <taxon>Euteleostomi</taxon>
        <taxon>Mammalia</taxon>
        <taxon>Eutheria</taxon>
        <taxon>Euarchontoglires</taxon>
        <taxon>Glires</taxon>
        <taxon>Rodentia</taxon>
        <taxon>Myomorpha</taxon>
        <taxon>Muroidea</taxon>
        <taxon>Muridae</taxon>
        <taxon>Murinae</taxon>
        <taxon>Mus</taxon>
        <taxon>Mus</taxon>
    </lineage>
</organism>
<gene>
    <name type="primary">Dip2b</name>
    <name type="synonym">Kiaa1463</name>
</gene>